<feature type="chain" id="PRO_1000193061" description="Phosphoribosylformylglycinamidine cyclo-ligase">
    <location>
        <begin position="1"/>
        <end position="349"/>
    </location>
</feature>
<sequence length="349" mass="38145">MVTYKDAGVDIYKEDKVIRALASQIKFERTDAIKPADLKGHYAGAIEFGDYYLVLCTDGVGSKMVVAEMANKFDTVPIDMIAMNVNDAICIGAEPVALVDYMAVEDITEDIASQIGKGLNDGIKESNINLIGGETASLPNMIKGVDLAGTVLAVVKKDEIVSGKEVKPGDVIVGLRSSGIHSNGLSLARKVFFDITNLDVNSKLSHGKTVAEELLTPTKIYVKPVLEMIKQVNVKGLAHITGGGFRKLKRLNKDVCYKIDELPEILPIFKEIQNLGNVADQEMFKTFNMGIGFCVIVEKEDAEKIIEIANHHNIPAFVIGKIEDSVEIGGKTKRETVLVEYNNKKMIME</sequence>
<evidence type="ECO:0000255" key="1">
    <source>
        <dbReference type="HAMAP-Rule" id="MF_00741"/>
    </source>
</evidence>
<accession>A9AA59</accession>
<gene>
    <name evidence="1" type="primary">purM</name>
    <name type="ordered locus">MmarC6_1419</name>
</gene>
<reference key="1">
    <citation type="submission" date="2007-10" db="EMBL/GenBank/DDBJ databases">
        <title>Complete sequence of Methanococcus maripaludis C6.</title>
        <authorList>
            <consortium name="US DOE Joint Genome Institute"/>
            <person name="Copeland A."/>
            <person name="Lucas S."/>
            <person name="Lapidus A."/>
            <person name="Barry K."/>
            <person name="Glavina del Rio T."/>
            <person name="Dalin E."/>
            <person name="Tice H."/>
            <person name="Pitluck S."/>
            <person name="Clum A."/>
            <person name="Schmutz J."/>
            <person name="Larimer F."/>
            <person name="Land M."/>
            <person name="Hauser L."/>
            <person name="Kyrpides N."/>
            <person name="Mikhailova N."/>
            <person name="Sieprawska-Lupa M."/>
            <person name="Whitman W.B."/>
            <person name="Richardson P."/>
        </authorList>
    </citation>
    <scope>NUCLEOTIDE SEQUENCE [LARGE SCALE GENOMIC DNA]</scope>
    <source>
        <strain>C6 / ATCC BAA-1332</strain>
    </source>
</reference>
<protein>
    <recommendedName>
        <fullName evidence="1">Phosphoribosylformylglycinamidine cyclo-ligase</fullName>
        <ecNumber evidence="1">6.3.3.1</ecNumber>
    </recommendedName>
    <alternativeName>
        <fullName evidence="1">AIR synthase</fullName>
    </alternativeName>
    <alternativeName>
        <fullName evidence="1">AIRS</fullName>
    </alternativeName>
    <alternativeName>
        <fullName evidence="1">Phosphoribosyl-aminoimidazole synthetase</fullName>
    </alternativeName>
</protein>
<comment type="catalytic activity">
    <reaction evidence="1">
        <text>2-formamido-N(1)-(5-O-phospho-beta-D-ribosyl)acetamidine + ATP = 5-amino-1-(5-phospho-beta-D-ribosyl)imidazole + ADP + phosphate + H(+)</text>
        <dbReference type="Rhea" id="RHEA:23032"/>
        <dbReference type="ChEBI" id="CHEBI:15378"/>
        <dbReference type="ChEBI" id="CHEBI:30616"/>
        <dbReference type="ChEBI" id="CHEBI:43474"/>
        <dbReference type="ChEBI" id="CHEBI:137981"/>
        <dbReference type="ChEBI" id="CHEBI:147287"/>
        <dbReference type="ChEBI" id="CHEBI:456216"/>
        <dbReference type="EC" id="6.3.3.1"/>
    </reaction>
</comment>
<comment type="pathway">
    <text evidence="1">Purine metabolism; IMP biosynthesis via de novo pathway; 5-amino-1-(5-phospho-D-ribosyl)imidazole from N(2)-formyl-N(1)-(5-phospho-D-ribosyl)glycinamide: step 2/2.</text>
</comment>
<comment type="subcellular location">
    <subcellularLocation>
        <location evidence="1">Cytoplasm</location>
    </subcellularLocation>
</comment>
<comment type="similarity">
    <text evidence="1">Belongs to the AIR synthase family.</text>
</comment>
<keyword id="KW-0067">ATP-binding</keyword>
<keyword id="KW-0963">Cytoplasm</keyword>
<keyword id="KW-0436">Ligase</keyword>
<keyword id="KW-0547">Nucleotide-binding</keyword>
<keyword id="KW-0658">Purine biosynthesis</keyword>
<organism>
    <name type="scientific">Methanococcus maripaludis (strain C6 / ATCC BAA-1332)</name>
    <dbReference type="NCBI Taxonomy" id="444158"/>
    <lineage>
        <taxon>Archaea</taxon>
        <taxon>Methanobacteriati</taxon>
        <taxon>Methanobacteriota</taxon>
        <taxon>Methanomada group</taxon>
        <taxon>Methanococci</taxon>
        <taxon>Methanococcales</taxon>
        <taxon>Methanococcaceae</taxon>
        <taxon>Methanococcus</taxon>
    </lineage>
</organism>
<name>PUR5_METM6</name>
<dbReference type="EC" id="6.3.3.1" evidence="1"/>
<dbReference type="EMBL" id="CP000867">
    <property type="protein sequence ID" value="ABX02232.1"/>
    <property type="molecule type" value="Genomic_DNA"/>
</dbReference>
<dbReference type="SMR" id="A9AA59"/>
<dbReference type="STRING" id="444158.MmarC6_1419"/>
<dbReference type="KEGG" id="mmx:MmarC6_1419"/>
<dbReference type="eggNOG" id="arCOG00639">
    <property type="taxonomic scope" value="Archaea"/>
</dbReference>
<dbReference type="HOGENOM" id="CLU_047116_0_0_2"/>
<dbReference type="OrthoDB" id="6605at2157"/>
<dbReference type="PhylomeDB" id="A9AA59"/>
<dbReference type="UniPathway" id="UPA00074">
    <property type="reaction ID" value="UER00129"/>
</dbReference>
<dbReference type="GO" id="GO:0005829">
    <property type="term" value="C:cytosol"/>
    <property type="evidence" value="ECO:0007669"/>
    <property type="project" value="TreeGrafter"/>
</dbReference>
<dbReference type="GO" id="GO:0005524">
    <property type="term" value="F:ATP binding"/>
    <property type="evidence" value="ECO:0007669"/>
    <property type="project" value="UniProtKB-KW"/>
</dbReference>
<dbReference type="GO" id="GO:0004637">
    <property type="term" value="F:phosphoribosylamine-glycine ligase activity"/>
    <property type="evidence" value="ECO:0007669"/>
    <property type="project" value="TreeGrafter"/>
</dbReference>
<dbReference type="GO" id="GO:0004641">
    <property type="term" value="F:phosphoribosylformylglycinamidine cyclo-ligase activity"/>
    <property type="evidence" value="ECO:0007669"/>
    <property type="project" value="UniProtKB-UniRule"/>
</dbReference>
<dbReference type="GO" id="GO:0006189">
    <property type="term" value="P:'de novo' IMP biosynthetic process"/>
    <property type="evidence" value="ECO:0007669"/>
    <property type="project" value="UniProtKB-UniRule"/>
</dbReference>
<dbReference type="GO" id="GO:0046084">
    <property type="term" value="P:adenine biosynthetic process"/>
    <property type="evidence" value="ECO:0007669"/>
    <property type="project" value="TreeGrafter"/>
</dbReference>
<dbReference type="CDD" id="cd02196">
    <property type="entry name" value="PurM"/>
    <property type="match status" value="1"/>
</dbReference>
<dbReference type="FunFam" id="3.30.1330.10:FF:000020">
    <property type="entry name" value="Phosphoribosylformylglycinamidine cyclo-ligase"/>
    <property type="match status" value="1"/>
</dbReference>
<dbReference type="FunFam" id="3.90.650.10:FF:000011">
    <property type="entry name" value="Phosphoribosylformylglycinamidine cyclo-ligase"/>
    <property type="match status" value="1"/>
</dbReference>
<dbReference type="Gene3D" id="3.90.650.10">
    <property type="entry name" value="PurM-like C-terminal domain"/>
    <property type="match status" value="1"/>
</dbReference>
<dbReference type="Gene3D" id="3.30.1330.10">
    <property type="entry name" value="PurM-like, N-terminal domain"/>
    <property type="match status" value="1"/>
</dbReference>
<dbReference type="HAMAP" id="MF_00741">
    <property type="entry name" value="AIRS"/>
    <property type="match status" value="1"/>
</dbReference>
<dbReference type="InterPro" id="IPR010918">
    <property type="entry name" value="PurM-like_C_dom"/>
</dbReference>
<dbReference type="InterPro" id="IPR036676">
    <property type="entry name" value="PurM-like_C_sf"/>
</dbReference>
<dbReference type="InterPro" id="IPR016188">
    <property type="entry name" value="PurM-like_N"/>
</dbReference>
<dbReference type="InterPro" id="IPR036921">
    <property type="entry name" value="PurM-like_N_sf"/>
</dbReference>
<dbReference type="InterPro" id="IPR004733">
    <property type="entry name" value="PurM_cligase"/>
</dbReference>
<dbReference type="NCBIfam" id="TIGR00878">
    <property type="entry name" value="purM"/>
    <property type="match status" value="1"/>
</dbReference>
<dbReference type="PANTHER" id="PTHR10520:SF12">
    <property type="entry name" value="TRIFUNCTIONAL PURINE BIOSYNTHETIC PROTEIN ADENOSINE-3"/>
    <property type="match status" value="1"/>
</dbReference>
<dbReference type="PANTHER" id="PTHR10520">
    <property type="entry name" value="TRIFUNCTIONAL PURINE BIOSYNTHETIC PROTEIN ADENOSINE-3-RELATED"/>
    <property type="match status" value="1"/>
</dbReference>
<dbReference type="Pfam" id="PF00586">
    <property type="entry name" value="AIRS"/>
    <property type="match status" value="1"/>
</dbReference>
<dbReference type="Pfam" id="PF02769">
    <property type="entry name" value="AIRS_C"/>
    <property type="match status" value="1"/>
</dbReference>
<dbReference type="SUPFAM" id="SSF56042">
    <property type="entry name" value="PurM C-terminal domain-like"/>
    <property type="match status" value="1"/>
</dbReference>
<dbReference type="SUPFAM" id="SSF55326">
    <property type="entry name" value="PurM N-terminal domain-like"/>
    <property type="match status" value="1"/>
</dbReference>
<proteinExistence type="inferred from homology"/>